<keyword id="KW-1185">Reference proteome</keyword>
<keyword id="KW-0964">Secreted</keyword>
<gene>
    <name type="primary">NXPH4</name>
</gene>
<evidence type="ECO:0000250" key="1"/>
<evidence type="ECO:0000305" key="2"/>
<feature type="chain" id="PRO_0000160258" description="Neurexophilin-4">
    <location>
        <begin position="1" status="less than"/>
        <end position="77"/>
    </location>
</feature>
<feature type="region of interest" description="V (Cys-rich)">
    <location>
        <begin position="1" status="less than"/>
        <end position="77"/>
    </location>
</feature>
<feature type="non-terminal residue">
    <location>
        <position position="1"/>
    </location>
</feature>
<organism>
    <name type="scientific">Macaca mulatta</name>
    <name type="common">Rhesus macaque</name>
    <dbReference type="NCBI Taxonomy" id="9544"/>
    <lineage>
        <taxon>Eukaryota</taxon>
        <taxon>Metazoa</taxon>
        <taxon>Chordata</taxon>
        <taxon>Craniata</taxon>
        <taxon>Vertebrata</taxon>
        <taxon>Euteleostomi</taxon>
        <taxon>Mammalia</taxon>
        <taxon>Eutheria</taxon>
        <taxon>Euarchontoglires</taxon>
        <taxon>Primates</taxon>
        <taxon>Haplorrhini</taxon>
        <taxon>Catarrhini</taxon>
        <taxon>Cercopithecidae</taxon>
        <taxon>Cercopithecinae</taxon>
        <taxon>Macaca</taxon>
    </lineage>
</organism>
<accession>Q8WMJ7</accession>
<proteinExistence type="evidence at transcript level"/>
<comment type="function">
    <text evidence="2">May be signaling molecules that resemble neuropeptides and that act by binding to alpha-neurexins and possibly other receptors.</text>
</comment>
<comment type="subcellular location">
    <subcellularLocation>
        <location evidence="2">Secreted</location>
    </subcellularLocation>
</comment>
<comment type="PTM">
    <text evidence="1">May be proteolytically processed at the boundary between the N-terminal non-conserved and the central conserved domain in neuron-like cells.</text>
</comment>
<comment type="similarity">
    <text evidence="2">Belongs to the neurexophilin family.</text>
</comment>
<reference key="1">
    <citation type="submission" date="2001-09" db="EMBL/GenBank/DDBJ databases">
        <authorList>
            <person name="Brown A.E."/>
            <person name="Ojeda S.R."/>
        </authorList>
    </citation>
    <scope>NUCLEOTIDE SEQUENCE [MRNA]</scope>
    <source>
        <tissue>Hypothalamus</tissue>
    </source>
</reference>
<name>NXPH4_MACMU</name>
<protein>
    <recommendedName>
        <fullName>Neurexophilin-4</fullName>
    </recommendedName>
</protein>
<dbReference type="EMBL" id="AF424820">
    <property type="protein sequence ID" value="AAL40236.1"/>
    <property type="molecule type" value="mRNA"/>
</dbReference>
<dbReference type="SMR" id="Q8WMJ7"/>
<dbReference type="STRING" id="9544.ENSMMUP00000028686"/>
<dbReference type="PaxDb" id="9544-ENSMMUP00000028686"/>
<dbReference type="eggNOG" id="ENOG502QPNQ">
    <property type="taxonomic scope" value="Eukaryota"/>
</dbReference>
<dbReference type="InParanoid" id="Q8WMJ7"/>
<dbReference type="Proteomes" id="UP000006718">
    <property type="component" value="Unassembled WGS sequence"/>
</dbReference>
<dbReference type="GO" id="GO:0005576">
    <property type="term" value="C:extracellular region"/>
    <property type="evidence" value="ECO:0007669"/>
    <property type="project" value="UniProtKB-SubCell"/>
</dbReference>
<dbReference type="InterPro" id="IPR010450">
    <property type="entry name" value="Nxph"/>
</dbReference>
<dbReference type="InterPro" id="IPR026845">
    <property type="entry name" value="NXPH/NXPE"/>
</dbReference>
<dbReference type="PANTHER" id="PTHR17103">
    <property type="entry name" value="NEUREXOPHILIN"/>
    <property type="match status" value="1"/>
</dbReference>
<dbReference type="PANTHER" id="PTHR17103:SF10">
    <property type="entry name" value="NEUREXOPHILIN-4"/>
    <property type="match status" value="1"/>
</dbReference>
<dbReference type="Pfam" id="PF06312">
    <property type="entry name" value="Neurexophilin"/>
    <property type="match status" value="1"/>
</dbReference>
<sequence length="77" mass="9155">NCHVEYEKTNRARKHRPCLYDPSQVCFTEHTQSQAAWLCAKPYKVICIFVSFLSFDYKLVQKVCPDYNFQSEHPYFG</sequence>